<evidence type="ECO:0000269" key="1">
    <source>
    </source>
</evidence>
<evidence type="ECO:0000269" key="2">
    <source>
    </source>
</evidence>
<evidence type="ECO:0000269" key="3">
    <source>
    </source>
</evidence>
<evidence type="ECO:0000303" key="4">
    <source>
    </source>
</evidence>
<evidence type="ECO:0000305" key="5"/>
<evidence type="ECO:0000305" key="6">
    <source>
    </source>
</evidence>
<evidence type="ECO:0000305" key="7">
    <source>
    </source>
</evidence>
<evidence type="ECO:0007829" key="8">
    <source>
        <dbReference type="PDB" id="1GX3"/>
    </source>
</evidence>
<evidence type="ECO:0007829" key="9">
    <source>
        <dbReference type="PDB" id="1W5R"/>
    </source>
</evidence>
<feature type="chain" id="PRO_0000107918" description="Arylamine N-acetyltransferase">
    <location>
        <begin position="1"/>
        <end position="275"/>
    </location>
</feature>
<feature type="active site" description="Acyl-thioester intermediate" evidence="6 7">
    <location>
        <position position="70"/>
    </location>
</feature>
<feature type="active site" evidence="6 7">
    <location>
        <position position="110"/>
    </location>
</feature>
<feature type="active site" evidence="6 7">
    <location>
        <position position="127"/>
    </location>
</feature>
<feature type="mutagenesis site" description="Loss of activity." evidence="2">
    <original>C</original>
    <variation>A</variation>
    <variation>S</variation>
    <variation>Q</variation>
    <location>
        <position position="70"/>
    </location>
</feature>
<feature type="mutagenesis site" description="Loss of activity." evidence="2">
    <original>H</original>
    <variation>A</variation>
    <variation>R</variation>
    <variation>W</variation>
    <location>
        <position position="110"/>
    </location>
</feature>
<feature type="mutagenesis site" description="Loss of activity." evidence="2">
    <original>D</original>
    <variation>A</variation>
    <variation>N</variation>
    <variation>W</variation>
    <location>
        <position position="127"/>
    </location>
</feature>
<feature type="helix" evidence="9">
    <location>
        <begin position="5"/>
        <end position="11"/>
    </location>
</feature>
<feature type="helix" evidence="9">
    <location>
        <begin position="22"/>
        <end position="35"/>
    </location>
</feature>
<feature type="helix" evidence="9">
    <location>
        <begin position="41"/>
        <end position="44"/>
    </location>
</feature>
<feature type="helix" evidence="9">
    <location>
        <begin position="54"/>
        <end position="61"/>
    </location>
</feature>
<feature type="turn" evidence="9">
    <location>
        <begin position="62"/>
        <end position="64"/>
    </location>
</feature>
<feature type="helix" evidence="9">
    <location>
        <begin position="70"/>
        <end position="84"/>
    </location>
</feature>
<feature type="strand" evidence="9">
    <location>
        <begin position="87"/>
        <end position="95"/>
    </location>
</feature>
<feature type="strand" evidence="9">
    <location>
        <begin position="108"/>
        <end position="116"/>
    </location>
</feature>
<feature type="strand" evidence="8">
    <location>
        <begin position="120"/>
        <end position="122"/>
    </location>
</feature>
<feature type="strand" evidence="9">
    <location>
        <begin position="124"/>
        <end position="126"/>
    </location>
</feature>
<feature type="strand" evidence="9">
    <location>
        <begin position="139"/>
        <end position="141"/>
    </location>
</feature>
<feature type="strand" evidence="9">
    <location>
        <begin position="143"/>
        <end position="147"/>
    </location>
</feature>
<feature type="strand" evidence="9">
    <location>
        <begin position="150"/>
        <end position="152"/>
    </location>
</feature>
<feature type="strand" evidence="9">
    <location>
        <begin position="154"/>
        <end position="159"/>
    </location>
</feature>
<feature type="strand" evidence="9">
    <location>
        <begin position="162"/>
        <end position="169"/>
    </location>
</feature>
<feature type="strand" evidence="9">
    <location>
        <begin position="172"/>
        <end position="179"/>
    </location>
</feature>
<feature type="helix" evidence="9">
    <location>
        <begin position="186"/>
        <end position="198"/>
    </location>
</feature>
<feature type="helix" evidence="9">
    <location>
        <begin position="203"/>
        <end position="206"/>
    </location>
</feature>
<feature type="strand" evidence="9">
    <location>
        <begin position="209"/>
        <end position="213"/>
    </location>
</feature>
<feature type="strand" evidence="9">
    <location>
        <begin position="215"/>
        <end position="222"/>
    </location>
</feature>
<feature type="strand" evidence="9">
    <location>
        <begin position="225"/>
        <end position="230"/>
    </location>
</feature>
<feature type="strand" evidence="9">
    <location>
        <begin position="233"/>
        <end position="241"/>
    </location>
</feature>
<feature type="helix" evidence="9">
    <location>
        <begin position="242"/>
        <end position="251"/>
    </location>
</feature>
<feature type="helix" evidence="9">
    <location>
        <begin position="257"/>
        <end position="260"/>
    </location>
</feature>
<feature type="helix" evidence="9">
    <location>
        <begin position="265"/>
        <end position="271"/>
    </location>
</feature>
<feature type="turn" evidence="9">
    <location>
        <begin position="272"/>
        <end position="274"/>
    </location>
</feature>
<sequence length="275" mass="30174">MAMDLGGYLTRIGLDGRPRPDLGTLHAIVAAHNRSIPFENLDPLLGIPVADLSAEALFAKLVDRRRGGYCYEHNGLLGYVLEELGFEVERLSGRVVWMRADDAPLPAQTHNVLSVAVPGADGRYLVDVGFGGQTLTSPIRLEAGPVQQTRHEPYRLTRHGDDHTLAAQVRGEWQPLYTFTTEPRPRIDLEVGSWYVSTHPGSHFVTGLTVAVVTDDARYNLRGRNLAVHRSGATEHIRFDSAAQVLDAIVNRFGIDLGDLAGRDVQARVAEVLDT</sequence>
<comment type="function">
    <text evidence="1 3">Catalyzes the transfer of the acetyl group from acetyl coenzyme A to the free amino group of arylamines and hydrazines. Substrates include isoniazid, anisidine, and 4-aminoveratrole, and to a much lesser extent, p-aminobenzoic acid.</text>
</comment>
<comment type="catalytic activity">
    <reaction evidence="1 3">
        <text>an arylamine + acetyl-CoA = an N-acetylarylamine + CoA</text>
        <dbReference type="Rhea" id="RHEA:16613"/>
        <dbReference type="ChEBI" id="CHEBI:13790"/>
        <dbReference type="ChEBI" id="CHEBI:50471"/>
        <dbReference type="ChEBI" id="CHEBI:57287"/>
        <dbReference type="ChEBI" id="CHEBI:57288"/>
        <dbReference type="EC" id="2.3.1.5"/>
    </reaction>
</comment>
<comment type="biophysicochemical properties">
    <kinetics>
        <KM evidence="3">25 uM for isoniazid</KM>
        <KM evidence="3">300 uM for anisidine</KM>
        <KM evidence="3">650 uM for 4-aminoveratrole</KM>
        <KM evidence="3">87 uM for isoniazid</KM>
        <KM evidence="3">245 uM for 4-anisidine</KM>
        <KM evidence="3">1.42 mM for 4-aminoveratrole</KM>
        <Vmax evidence="3">63.0 nmol/min/mg enzyme with isoniazid as substrate</Vmax>
        <Vmax evidence="3">4.8 nmol/min/mg enzyme with anisidine as substrate</Vmax>
        <Vmax evidence="3">16.2 nmol/min/mg enzyme with 4-aminoveratrole as substrate</Vmax>
        <Vmax evidence="3">115.0 nmol/min/mg enzyme with isoniazid as substrate</Vmax>
        <Vmax evidence="3">114.0 nmol/min/mg enzyme with 4-anisidine as substrate</Vmax>
        <Vmax evidence="3">6.5 umol/min/mg enzyme with 4-aminoveratrole as substrate</Vmax>
    </kinetics>
</comment>
<comment type="subunit">
    <text evidence="1">Homodimer and homotetramer.</text>
</comment>
<comment type="similarity">
    <text evidence="5">Belongs to the arylamine N-acetyltransferase family.</text>
</comment>
<comment type="sequence caution" evidence="5">
    <conflict type="erroneous initiation">
        <sequence resource="EMBL-CDS" id="CAA07100"/>
    </conflict>
    <text>Extended N-terminus.</text>
</comment>
<protein>
    <recommendedName>
        <fullName evidence="4">Arylamine N-acetyltransferase</fullName>
        <shortName evidence="4">NAT</shortName>
        <ecNumber evidence="1 3">2.3.1.5</ecNumber>
    </recommendedName>
</protein>
<proteinExistence type="evidence at protein level"/>
<organism>
    <name type="scientific">Mycolicibacterium smegmatis</name>
    <name type="common">Mycobacterium smegmatis</name>
    <dbReference type="NCBI Taxonomy" id="1772"/>
    <lineage>
        <taxon>Bacteria</taxon>
        <taxon>Bacillati</taxon>
        <taxon>Actinomycetota</taxon>
        <taxon>Actinomycetes</taxon>
        <taxon>Mycobacteriales</taxon>
        <taxon>Mycobacteriaceae</taxon>
        <taxon>Mycolicibacterium</taxon>
    </lineage>
</organism>
<name>NAT_MYCSM</name>
<reference key="1">
    <citation type="journal article" date="1999" name="J. Bacteriol.">
        <title>Cloning and characterization of arylamine N-acetyltransferase genes from Mycobacterium smegmatis and Mycobacterium tuberculosis: increased expression results in isoniazid resistance.</title>
        <authorList>
            <person name="Payton M.A."/>
            <person name="Auty R."/>
            <person name="Delgoda R.T."/>
            <person name="Everitt M."/>
            <person name="Sim E."/>
        </authorList>
    </citation>
    <scope>NUCLEOTIDE SEQUENCE [GENOMIC DNA]</scope>
    <scope>FUNCTION</scope>
    <scope>CATALYTIC ACTIVITY</scope>
    <scope>BIOPHYSICOCHEMICAL PROPERTIES</scope>
</reference>
<reference key="2">
    <citation type="journal article" date="2002" name="J. Mol. Biol.">
        <title>The structure of arylamine N-acetyltransferase from Mycobacterium smegmatis -- an enzyme which inactivates the anti-tubercular drug, isoniazid.</title>
        <authorList>
            <person name="Sandy J."/>
            <person name="Mushtaq A."/>
            <person name="Kawamura A."/>
            <person name="Sinclair J."/>
            <person name="Sim E."/>
            <person name="Noble M.E.M."/>
        </authorList>
    </citation>
    <scope>X-RAY CRYSTALLOGRAPHY (1.7 ANGSTROMS)</scope>
    <scope>FUNCTION</scope>
    <scope>CATALYTIC ACTIVITY</scope>
    <scope>BIOPHYSICOCHEMICAL PROPERTIES</scope>
    <scope>SUBUNIT</scope>
    <scope>ACTIVE SITE</scope>
</reference>
<reference key="3">
    <citation type="journal article" date="2005" name="Biochem. J.">
        <title>Investigation of the catalytic triad of arylamine N-acetyltransferases: essential residues required for acetyl transfer to arylamines.</title>
        <authorList>
            <person name="Sandy J."/>
            <person name="Mushtaq A."/>
            <person name="Holton S.J."/>
            <person name="Schartau P."/>
            <person name="Noble M.E.M."/>
            <person name="Sim E."/>
        </authorList>
    </citation>
    <scope>X-RAY CRYSTALLOGRAPHY (1.45 ANGSTROMS) OF WILD-TYPE IN COMPLEX WITH ISONIAZID AND OF MUTANT GLN-70</scope>
    <scope>MUTAGENESIS OF CYS-70; HIS-110 AND ASP-127</scope>
    <scope>ACTIVE SITE</scope>
</reference>
<gene>
    <name evidence="4" type="primary">nat</name>
</gene>
<dbReference type="EC" id="2.3.1.5" evidence="1 3"/>
<dbReference type="EMBL" id="AJ006588">
    <property type="protein sequence ID" value="CAA07100.2"/>
    <property type="status" value="ALT_INIT"/>
    <property type="molecule type" value="Genomic_DNA"/>
</dbReference>
<dbReference type="RefSeq" id="WP_239709051.1">
    <property type="nucleotide sequence ID" value="NZ_CP080273.1"/>
</dbReference>
<dbReference type="PDB" id="1GX3">
    <property type="method" value="X-ray"/>
    <property type="resolution" value="1.70 A"/>
    <property type="chains" value="A/B/C/D=1-275"/>
</dbReference>
<dbReference type="PDB" id="1W5R">
    <property type="method" value="X-ray"/>
    <property type="resolution" value="1.45 A"/>
    <property type="chains" value="A/B=1-275"/>
</dbReference>
<dbReference type="PDB" id="1W6F">
    <property type="method" value="X-ray"/>
    <property type="resolution" value="2.10 A"/>
    <property type="chains" value="A/B/C/D=1-275"/>
</dbReference>
<dbReference type="PDBsum" id="1GX3"/>
<dbReference type="PDBsum" id="1W5R"/>
<dbReference type="PDBsum" id="1W6F"/>
<dbReference type="SMR" id="O86309"/>
<dbReference type="BindingDB" id="O86309"/>
<dbReference type="ChEMBL" id="CHEMBL6060"/>
<dbReference type="BRENDA" id="2.3.1.5">
    <property type="organism ID" value="3512"/>
</dbReference>
<dbReference type="SABIO-RK" id="O86309"/>
<dbReference type="EvolutionaryTrace" id="O86309"/>
<dbReference type="GO" id="GO:0004060">
    <property type="term" value="F:arylamine N-acetyltransferase activity"/>
    <property type="evidence" value="ECO:0007669"/>
    <property type="project" value="UniProtKB-EC"/>
</dbReference>
<dbReference type="Gene3D" id="3.30.2140.10">
    <property type="entry name" value="Arylamine N-acetyltransferase"/>
    <property type="match status" value="1"/>
</dbReference>
<dbReference type="Gene3D" id="2.40.128.150">
    <property type="entry name" value="Cysteine proteinases"/>
    <property type="match status" value="1"/>
</dbReference>
<dbReference type="InterPro" id="IPR001447">
    <property type="entry name" value="Arylamine_N-AcTrfase"/>
</dbReference>
<dbReference type="InterPro" id="IPR038765">
    <property type="entry name" value="Papain-like_cys_pep_sf"/>
</dbReference>
<dbReference type="PANTHER" id="PTHR11786:SF0">
    <property type="entry name" value="ARYLAMINE N-ACETYLTRANSFERASE 4-RELATED"/>
    <property type="match status" value="1"/>
</dbReference>
<dbReference type="PANTHER" id="PTHR11786">
    <property type="entry name" value="N-HYDROXYARYLAMINE O-ACETYLTRANSFERASE"/>
    <property type="match status" value="1"/>
</dbReference>
<dbReference type="Pfam" id="PF00797">
    <property type="entry name" value="Acetyltransf_2"/>
    <property type="match status" value="1"/>
</dbReference>
<dbReference type="PRINTS" id="PR01543">
    <property type="entry name" value="ANATRNSFRASE"/>
</dbReference>
<dbReference type="SUPFAM" id="SSF54001">
    <property type="entry name" value="Cysteine proteinases"/>
    <property type="match status" value="1"/>
</dbReference>
<accession>O86309</accession>
<keyword id="KW-0002">3D-structure</keyword>
<keyword id="KW-0012">Acyltransferase</keyword>
<keyword id="KW-0808">Transferase</keyword>